<feature type="initiator methionine" description="Removed" evidence="3">
    <location>
        <position position="1"/>
    </location>
</feature>
<feature type="chain" id="PRO_0000052798" description="Hemoglobin subunit alpha">
    <location>
        <begin position="2"/>
        <end position="142"/>
    </location>
</feature>
<feature type="peptide" id="PRO_0000455957" description="Hemopressin" evidence="2">
    <location>
        <begin position="96"/>
        <end position="104"/>
    </location>
</feature>
<feature type="domain" description="Globin" evidence="5">
    <location>
        <begin position="2"/>
        <end position="142"/>
    </location>
</feature>
<feature type="binding site" evidence="5">
    <location>
        <position position="59"/>
    </location>
    <ligand>
        <name>O2</name>
        <dbReference type="ChEBI" id="CHEBI:15379"/>
    </ligand>
</feature>
<feature type="binding site" description="proximal binding residue" evidence="5">
    <location>
        <position position="88"/>
    </location>
    <ligand>
        <name>heme b</name>
        <dbReference type="ChEBI" id="CHEBI:60344"/>
    </ligand>
    <ligandPart>
        <name>Fe</name>
        <dbReference type="ChEBI" id="CHEBI:18248"/>
    </ligandPart>
</feature>
<feature type="modified residue" description="Phosphoserine" evidence="4">
    <location>
        <position position="4"/>
    </location>
</feature>
<feature type="modified residue" description="N6-succinyllysine" evidence="1">
    <location>
        <position position="8"/>
    </location>
</feature>
<feature type="modified residue" description="N6-succinyllysine" evidence="1">
    <location>
        <position position="12"/>
    </location>
</feature>
<feature type="modified residue" description="N6-acetyllysine; alternate" evidence="4">
    <location>
        <position position="17"/>
    </location>
</feature>
<feature type="modified residue" description="N6-succinyllysine; alternate" evidence="1">
    <location>
        <position position="17"/>
    </location>
</feature>
<feature type="modified residue" description="Phosphotyrosine" evidence="4">
    <location>
        <position position="25"/>
    </location>
</feature>
<feature type="modified residue" description="Phosphoserine" evidence="4">
    <location>
        <position position="36"/>
    </location>
</feature>
<feature type="modified residue" description="N6-succinyllysine" evidence="1">
    <location>
        <position position="41"/>
    </location>
</feature>
<feature type="modified residue" description="Phosphoserine" evidence="4">
    <location>
        <position position="50"/>
    </location>
</feature>
<feature type="modified residue" description="Phosphoserine" evidence="1">
    <location>
        <position position="103"/>
    </location>
</feature>
<feature type="modified residue" description="Phosphothreonine" evidence="1">
    <location>
        <position position="109"/>
    </location>
</feature>
<feature type="modified residue" description="Phosphoserine" evidence="1">
    <location>
        <position position="125"/>
    </location>
</feature>
<feature type="modified residue" description="Phosphothreonine" evidence="1">
    <location>
        <position position="135"/>
    </location>
</feature>
<feature type="modified residue" description="Phosphothreonine" evidence="1">
    <location>
        <position position="138"/>
    </location>
</feature>
<feature type="modified residue" description="Phosphoserine" evidence="1">
    <location>
        <position position="139"/>
    </location>
</feature>
<accession>P68235</accession>
<accession>P07423</accession>
<keyword id="KW-0007">Acetylation</keyword>
<keyword id="KW-0903">Direct protein sequencing</keyword>
<keyword id="KW-0349">Heme</keyword>
<keyword id="KW-0408">Iron</keyword>
<keyword id="KW-0479">Metal-binding</keyword>
<keyword id="KW-0561">Oxygen transport</keyword>
<keyword id="KW-0597">Phosphoprotein</keyword>
<keyword id="KW-1185">Reference proteome</keyword>
<keyword id="KW-0813">Transport</keyword>
<reference key="1">
    <citation type="journal article" date="1986" name="Biol. Chem. Hoppe-Seyler">
        <title>Primary structure of hemoglobin of the polar bear (Ursus maritimus, Carnivora) and the Asiatic black bear (Ursus tibetanus, Carnivora).</title>
        <authorList>
            <person name="Hofmann O."/>
            <person name="Schreitmuller T."/>
            <person name="Braunitzer G."/>
            <person name="Wiesner M.V.H."/>
        </authorList>
    </citation>
    <scope>PROTEIN SEQUENCE OF 2-142</scope>
</reference>
<proteinExistence type="evidence at protein level"/>
<gene>
    <name type="primary">HBA</name>
</gene>
<sequence length="142" mass="15241">MVLSPADKSNVKATWDKIGSHAGEYGGEALERTFASFPTTKTYFPHFDLSPGSAQVKAHGKKVADALTTAAGHLDDLPGALSALSDLHAHKLRVDPVNFKFLSHCLLVTLASHHPAEFTPAVHASLDKFFSAVSTVLTSKYR</sequence>
<dbReference type="PIR" id="A25880">
    <property type="entry name" value="HABRM"/>
</dbReference>
<dbReference type="RefSeq" id="XP_008694912.1">
    <property type="nucleotide sequence ID" value="XM_008696690.2"/>
</dbReference>
<dbReference type="SMR" id="P68235"/>
<dbReference type="STRING" id="29073.ENSUMAP00000028918"/>
<dbReference type="Ensembl" id="ENSUMAT00000034186">
    <property type="protein sequence ID" value="ENSUMAP00000028917"/>
    <property type="gene ID" value="ENSUMAG00000020979"/>
</dbReference>
<dbReference type="GeneID" id="103668444"/>
<dbReference type="KEGG" id="umr:103668444"/>
<dbReference type="CTD" id="15121"/>
<dbReference type="OMA" id="MFTSFPT"/>
<dbReference type="OrthoDB" id="8751793at2759"/>
<dbReference type="Proteomes" id="UP000261680">
    <property type="component" value="Unplaced"/>
</dbReference>
<dbReference type="GO" id="GO:0072562">
    <property type="term" value="C:blood microparticle"/>
    <property type="evidence" value="ECO:0007669"/>
    <property type="project" value="TreeGrafter"/>
</dbReference>
<dbReference type="GO" id="GO:0031838">
    <property type="term" value="C:haptoglobin-hemoglobin complex"/>
    <property type="evidence" value="ECO:0007669"/>
    <property type="project" value="TreeGrafter"/>
</dbReference>
<dbReference type="GO" id="GO:0005833">
    <property type="term" value="C:hemoglobin complex"/>
    <property type="evidence" value="ECO:0007669"/>
    <property type="project" value="InterPro"/>
</dbReference>
<dbReference type="GO" id="GO:0031720">
    <property type="term" value="F:haptoglobin binding"/>
    <property type="evidence" value="ECO:0007669"/>
    <property type="project" value="TreeGrafter"/>
</dbReference>
<dbReference type="GO" id="GO:0020037">
    <property type="term" value="F:heme binding"/>
    <property type="evidence" value="ECO:0007669"/>
    <property type="project" value="InterPro"/>
</dbReference>
<dbReference type="GO" id="GO:0005506">
    <property type="term" value="F:iron ion binding"/>
    <property type="evidence" value="ECO:0007669"/>
    <property type="project" value="InterPro"/>
</dbReference>
<dbReference type="GO" id="GO:0043177">
    <property type="term" value="F:organic acid binding"/>
    <property type="evidence" value="ECO:0007669"/>
    <property type="project" value="TreeGrafter"/>
</dbReference>
<dbReference type="GO" id="GO:0019825">
    <property type="term" value="F:oxygen binding"/>
    <property type="evidence" value="ECO:0007669"/>
    <property type="project" value="InterPro"/>
</dbReference>
<dbReference type="GO" id="GO:0005344">
    <property type="term" value="F:oxygen carrier activity"/>
    <property type="evidence" value="ECO:0007669"/>
    <property type="project" value="UniProtKB-KW"/>
</dbReference>
<dbReference type="GO" id="GO:0004601">
    <property type="term" value="F:peroxidase activity"/>
    <property type="evidence" value="ECO:0007669"/>
    <property type="project" value="TreeGrafter"/>
</dbReference>
<dbReference type="GO" id="GO:0042744">
    <property type="term" value="P:hydrogen peroxide catabolic process"/>
    <property type="evidence" value="ECO:0007669"/>
    <property type="project" value="TreeGrafter"/>
</dbReference>
<dbReference type="CDD" id="cd08927">
    <property type="entry name" value="Hb-alpha-like"/>
    <property type="match status" value="1"/>
</dbReference>
<dbReference type="FunFam" id="1.10.490.10:FF:000002">
    <property type="entry name" value="Hemoglobin subunit alpha"/>
    <property type="match status" value="1"/>
</dbReference>
<dbReference type="Gene3D" id="1.10.490.10">
    <property type="entry name" value="Globins"/>
    <property type="match status" value="1"/>
</dbReference>
<dbReference type="InterPro" id="IPR000971">
    <property type="entry name" value="Globin"/>
</dbReference>
<dbReference type="InterPro" id="IPR009050">
    <property type="entry name" value="Globin-like_sf"/>
</dbReference>
<dbReference type="InterPro" id="IPR012292">
    <property type="entry name" value="Globin/Proto"/>
</dbReference>
<dbReference type="InterPro" id="IPR002338">
    <property type="entry name" value="Hemoglobin_a-typ"/>
</dbReference>
<dbReference type="InterPro" id="IPR050056">
    <property type="entry name" value="Hemoglobin_oxygen_transport"/>
</dbReference>
<dbReference type="InterPro" id="IPR002339">
    <property type="entry name" value="Hemoglobin_pi"/>
</dbReference>
<dbReference type="PANTHER" id="PTHR11442">
    <property type="entry name" value="HEMOGLOBIN FAMILY MEMBER"/>
    <property type="match status" value="1"/>
</dbReference>
<dbReference type="PANTHER" id="PTHR11442:SF48">
    <property type="entry name" value="HEMOGLOBIN SUBUNIT ALPHA"/>
    <property type="match status" value="1"/>
</dbReference>
<dbReference type="Pfam" id="PF00042">
    <property type="entry name" value="Globin"/>
    <property type="match status" value="1"/>
</dbReference>
<dbReference type="PRINTS" id="PR00612">
    <property type="entry name" value="ALPHAHAEM"/>
</dbReference>
<dbReference type="PRINTS" id="PR00815">
    <property type="entry name" value="PIHAEM"/>
</dbReference>
<dbReference type="SUPFAM" id="SSF46458">
    <property type="entry name" value="Globin-like"/>
    <property type="match status" value="1"/>
</dbReference>
<dbReference type="PROSITE" id="PS01033">
    <property type="entry name" value="GLOBIN"/>
    <property type="match status" value="1"/>
</dbReference>
<protein>
    <recommendedName>
        <fullName>Hemoglobin subunit alpha</fullName>
    </recommendedName>
    <alternativeName>
        <fullName>Alpha-globin</fullName>
    </alternativeName>
    <alternativeName>
        <fullName>Hemoglobin alpha chain</fullName>
    </alternativeName>
    <component>
        <recommendedName>
            <fullName evidence="2">Hemopressin</fullName>
        </recommendedName>
    </component>
</protein>
<organism>
    <name type="scientific">Ursus maritimus</name>
    <name type="common">Polar bear</name>
    <name type="synonym">Thalarctos maritimus</name>
    <dbReference type="NCBI Taxonomy" id="29073"/>
    <lineage>
        <taxon>Eukaryota</taxon>
        <taxon>Metazoa</taxon>
        <taxon>Chordata</taxon>
        <taxon>Craniata</taxon>
        <taxon>Vertebrata</taxon>
        <taxon>Euteleostomi</taxon>
        <taxon>Mammalia</taxon>
        <taxon>Eutheria</taxon>
        <taxon>Laurasiatheria</taxon>
        <taxon>Carnivora</taxon>
        <taxon>Caniformia</taxon>
        <taxon>Ursidae</taxon>
        <taxon>Ursus</taxon>
    </lineage>
</organism>
<comment type="function">
    <text>Involved in oxygen transport from the lung to the various peripheral tissues.</text>
</comment>
<comment type="function">
    <molecule>Hemopressin</molecule>
    <text evidence="2">Hemopressin acts as an antagonist peptide of the cannabinoid receptor CNR1. Hemopressin-binding efficiently blocks cannabinoid receptor CNR1 and subsequent signaling.</text>
</comment>
<comment type="subunit">
    <text>Heterotetramer of two alpha chains and two beta chains.</text>
</comment>
<comment type="tissue specificity">
    <text>Red blood cells.</text>
</comment>
<comment type="similarity">
    <text evidence="5">Belongs to the globin family.</text>
</comment>
<evidence type="ECO:0000250" key="1">
    <source>
        <dbReference type="UniProtKB" id="P01942"/>
    </source>
</evidence>
<evidence type="ECO:0000250" key="2">
    <source>
        <dbReference type="UniProtKB" id="P01946"/>
    </source>
</evidence>
<evidence type="ECO:0000250" key="3">
    <source>
        <dbReference type="UniProtKB" id="P18969"/>
    </source>
</evidence>
<evidence type="ECO:0000250" key="4">
    <source>
        <dbReference type="UniProtKB" id="P69905"/>
    </source>
</evidence>
<evidence type="ECO:0000255" key="5">
    <source>
        <dbReference type="PROSITE-ProRule" id="PRU00238"/>
    </source>
</evidence>
<name>HBA_URSMA</name>